<feature type="chain" id="PRO_1000052629" description="Large ribosomal subunit protein uL22">
    <location>
        <begin position="1"/>
        <end position="110"/>
    </location>
</feature>
<dbReference type="EMBL" id="CT573326">
    <property type="protein sequence ID" value="CAK13441.1"/>
    <property type="molecule type" value="Genomic_DNA"/>
</dbReference>
<dbReference type="RefSeq" id="WP_003103908.1">
    <property type="nucleotide sequence ID" value="NC_008027.1"/>
</dbReference>
<dbReference type="SMR" id="Q1IFW1"/>
<dbReference type="STRING" id="384676.PSEEN0495"/>
<dbReference type="GeneID" id="98636788"/>
<dbReference type="KEGG" id="pen:PSEEN0495"/>
<dbReference type="eggNOG" id="COG0091">
    <property type="taxonomic scope" value="Bacteria"/>
</dbReference>
<dbReference type="HOGENOM" id="CLU_083987_3_3_6"/>
<dbReference type="OrthoDB" id="9805969at2"/>
<dbReference type="Proteomes" id="UP000000658">
    <property type="component" value="Chromosome"/>
</dbReference>
<dbReference type="GO" id="GO:0022625">
    <property type="term" value="C:cytosolic large ribosomal subunit"/>
    <property type="evidence" value="ECO:0007669"/>
    <property type="project" value="TreeGrafter"/>
</dbReference>
<dbReference type="GO" id="GO:0019843">
    <property type="term" value="F:rRNA binding"/>
    <property type="evidence" value="ECO:0007669"/>
    <property type="project" value="UniProtKB-UniRule"/>
</dbReference>
<dbReference type="GO" id="GO:0003735">
    <property type="term" value="F:structural constituent of ribosome"/>
    <property type="evidence" value="ECO:0007669"/>
    <property type="project" value="InterPro"/>
</dbReference>
<dbReference type="GO" id="GO:0006412">
    <property type="term" value="P:translation"/>
    <property type="evidence" value="ECO:0007669"/>
    <property type="project" value="UniProtKB-UniRule"/>
</dbReference>
<dbReference type="CDD" id="cd00336">
    <property type="entry name" value="Ribosomal_L22"/>
    <property type="match status" value="1"/>
</dbReference>
<dbReference type="FunFam" id="3.90.470.10:FF:000001">
    <property type="entry name" value="50S ribosomal protein L22"/>
    <property type="match status" value="1"/>
</dbReference>
<dbReference type="Gene3D" id="3.90.470.10">
    <property type="entry name" value="Ribosomal protein L22/L17"/>
    <property type="match status" value="1"/>
</dbReference>
<dbReference type="HAMAP" id="MF_01331_B">
    <property type="entry name" value="Ribosomal_uL22_B"/>
    <property type="match status" value="1"/>
</dbReference>
<dbReference type="InterPro" id="IPR001063">
    <property type="entry name" value="Ribosomal_uL22"/>
</dbReference>
<dbReference type="InterPro" id="IPR005727">
    <property type="entry name" value="Ribosomal_uL22_bac/chlpt-type"/>
</dbReference>
<dbReference type="InterPro" id="IPR047867">
    <property type="entry name" value="Ribosomal_uL22_bac/org-type"/>
</dbReference>
<dbReference type="InterPro" id="IPR018260">
    <property type="entry name" value="Ribosomal_uL22_CS"/>
</dbReference>
<dbReference type="InterPro" id="IPR036394">
    <property type="entry name" value="Ribosomal_uL22_sf"/>
</dbReference>
<dbReference type="NCBIfam" id="TIGR01044">
    <property type="entry name" value="rplV_bact"/>
    <property type="match status" value="1"/>
</dbReference>
<dbReference type="PANTHER" id="PTHR13501">
    <property type="entry name" value="CHLOROPLAST 50S RIBOSOMAL PROTEIN L22-RELATED"/>
    <property type="match status" value="1"/>
</dbReference>
<dbReference type="PANTHER" id="PTHR13501:SF8">
    <property type="entry name" value="LARGE RIBOSOMAL SUBUNIT PROTEIN UL22M"/>
    <property type="match status" value="1"/>
</dbReference>
<dbReference type="Pfam" id="PF00237">
    <property type="entry name" value="Ribosomal_L22"/>
    <property type="match status" value="1"/>
</dbReference>
<dbReference type="SUPFAM" id="SSF54843">
    <property type="entry name" value="Ribosomal protein L22"/>
    <property type="match status" value="1"/>
</dbReference>
<dbReference type="PROSITE" id="PS00464">
    <property type="entry name" value="RIBOSOMAL_L22"/>
    <property type="match status" value="1"/>
</dbReference>
<sequence length="110" mass="11911">MEVAAKLSGARISAQKARLVADQIRGKKVGEALNLLAFSSKKAAEIMKKVLESAVANAEHNEGADVDDLKVSTVFVNEGRSLKRIMPRAKGRADRIVKRSCHITVKVADK</sequence>
<proteinExistence type="inferred from homology"/>
<accession>Q1IFW1</accession>
<reference key="1">
    <citation type="journal article" date="2006" name="Nat. Biotechnol.">
        <title>Complete genome sequence of the entomopathogenic and metabolically versatile soil bacterium Pseudomonas entomophila.</title>
        <authorList>
            <person name="Vodovar N."/>
            <person name="Vallenet D."/>
            <person name="Cruveiller S."/>
            <person name="Rouy Z."/>
            <person name="Barbe V."/>
            <person name="Acosta C."/>
            <person name="Cattolico L."/>
            <person name="Jubin C."/>
            <person name="Lajus A."/>
            <person name="Segurens B."/>
            <person name="Vacherie B."/>
            <person name="Wincker P."/>
            <person name="Weissenbach J."/>
            <person name="Lemaitre B."/>
            <person name="Medigue C."/>
            <person name="Boccard F."/>
        </authorList>
    </citation>
    <scope>NUCLEOTIDE SEQUENCE [LARGE SCALE GENOMIC DNA]</scope>
    <source>
        <strain>L48</strain>
    </source>
</reference>
<comment type="function">
    <text evidence="1">This protein binds specifically to 23S rRNA; its binding is stimulated by other ribosomal proteins, e.g. L4, L17, and L20. It is important during the early stages of 50S assembly. It makes multiple contacts with different domains of the 23S rRNA in the assembled 50S subunit and ribosome (By similarity).</text>
</comment>
<comment type="function">
    <text evidence="1">The globular domain of the protein is located near the polypeptide exit tunnel on the outside of the subunit, while an extended beta-hairpin is found that lines the wall of the exit tunnel in the center of the 70S ribosome.</text>
</comment>
<comment type="subunit">
    <text evidence="1">Part of the 50S ribosomal subunit.</text>
</comment>
<comment type="similarity">
    <text evidence="1">Belongs to the universal ribosomal protein uL22 family.</text>
</comment>
<evidence type="ECO:0000255" key="1">
    <source>
        <dbReference type="HAMAP-Rule" id="MF_01331"/>
    </source>
</evidence>
<evidence type="ECO:0000305" key="2"/>
<organism>
    <name type="scientific">Pseudomonas entomophila (strain L48)</name>
    <dbReference type="NCBI Taxonomy" id="384676"/>
    <lineage>
        <taxon>Bacteria</taxon>
        <taxon>Pseudomonadati</taxon>
        <taxon>Pseudomonadota</taxon>
        <taxon>Gammaproteobacteria</taxon>
        <taxon>Pseudomonadales</taxon>
        <taxon>Pseudomonadaceae</taxon>
        <taxon>Pseudomonas</taxon>
    </lineage>
</organism>
<keyword id="KW-0687">Ribonucleoprotein</keyword>
<keyword id="KW-0689">Ribosomal protein</keyword>
<keyword id="KW-0694">RNA-binding</keyword>
<keyword id="KW-0699">rRNA-binding</keyword>
<protein>
    <recommendedName>
        <fullName evidence="1">Large ribosomal subunit protein uL22</fullName>
    </recommendedName>
    <alternativeName>
        <fullName evidence="2">50S ribosomal protein L22</fullName>
    </alternativeName>
</protein>
<name>RL22_PSEE4</name>
<gene>
    <name evidence="1" type="primary">rplV</name>
    <name type="ordered locus">PSEEN0495</name>
</gene>